<proteinExistence type="evidence at protein level"/>
<accession>Q96N11</accession>
<accession>Q9BQ43</accession>
<organism>
    <name type="scientific">Homo sapiens</name>
    <name type="common">Human</name>
    <dbReference type="NCBI Taxonomy" id="9606"/>
    <lineage>
        <taxon>Eukaryota</taxon>
        <taxon>Metazoa</taxon>
        <taxon>Chordata</taxon>
        <taxon>Craniata</taxon>
        <taxon>Vertebrata</taxon>
        <taxon>Euteleostomi</taxon>
        <taxon>Mammalia</taxon>
        <taxon>Eutheria</taxon>
        <taxon>Euarchontoglires</taxon>
        <taxon>Primates</taxon>
        <taxon>Haplorrhini</taxon>
        <taxon>Catarrhini</taxon>
        <taxon>Hominidae</taxon>
        <taxon>Homo</taxon>
    </lineage>
</organism>
<sequence length="449" mass="50047">MSDIRHSLLRRDALSAAKEVLYHLDIYFSSQLQSAPLPIVDKGPVELLEEFVFQVPKERSAQPKRLNSLQELQLLEIMCNYFQEQTKDSVRQIIFSSLFSPQGNKADDSRMSLLGKLVSMAVAVCRIPVLECAASWLQRTPVVYCVRLAKALVDDYCCLVPGSIQTLKQIFSASPRFCCQFITSVTALYDLSSDDLIPPMDLLEMIVTWIFEDPRLILITFLNTPIAANLPIGFLELTPLVGLIRWCVKAPLAYKRKKKPPLSNGHVSNKVTKDPGVGMDRDSHLLYSKLHLSVLQVLMTLQLHLTEKNLYGRLGLILFDHMVPLVEEINRLADELNPLNASQEIELSLDRLAQALQVAMASGALLCTRDDLRTLCSRLPHNNLLQLVISGPVQQSPHAALPPGFYPHIHTPPLGYGAVPAHPAAHPALPTHPGHTFISGVTFPFRPIR</sequence>
<reference key="1">
    <citation type="journal article" date="2004" name="Nat. Genet.">
        <title>Complete sequencing and characterization of 21,243 full-length human cDNAs.</title>
        <authorList>
            <person name="Ota T."/>
            <person name="Suzuki Y."/>
            <person name="Nishikawa T."/>
            <person name="Otsuki T."/>
            <person name="Sugiyama T."/>
            <person name="Irie R."/>
            <person name="Wakamatsu A."/>
            <person name="Hayashi K."/>
            <person name="Sato H."/>
            <person name="Nagai K."/>
            <person name="Kimura K."/>
            <person name="Makita H."/>
            <person name="Sekine M."/>
            <person name="Obayashi M."/>
            <person name="Nishi T."/>
            <person name="Shibahara T."/>
            <person name="Tanaka T."/>
            <person name="Ishii S."/>
            <person name="Yamamoto J."/>
            <person name="Saito K."/>
            <person name="Kawai Y."/>
            <person name="Isono Y."/>
            <person name="Nakamura Y."/>
            <person name="Nagahari K."/>
            <person name="Murakami K."/>
            <person name="Yasuda T."/>
            <person name="Iwayanagi T."/>
            <person name="Wagatsuma M."/>
            <person name="Shiratori A."/>
            <person name="Sudo H."/>
            <person name="Hosoiri T."/>
            <person name="Kaku Y."/>
            <person name="Kodaira H."/>
            <person name="Kondo H."/>
            <person name="Sugawara M."/>
            <person name="Takahashi M."/>
            <person name="Kanda K."/>
            <person name="Yokoi T."/>
            <person name="Furuya T."/>
            <person name="Kikkawa E."/>
            <person name="Omura Y."/>
            <person name="Abe K."/>
            <person name="Kamihara K."/>
            <person name="Katsuta N."/>
            <person name="Sato K."/>
            <person name="Tanikawa M."/>
            <person name="Yamazaki M."/>
            <person name="Ninomiya K."/>
            <person name="Ishibashi T."/>
            <person name="Yamashita H."/>
            <person name="Murakawa K."/>
            <person name="Fujimori K."/>
            <person name="Tanai H."/>
            <person name="Kimata M."/>
            <person name="Watanabe M."/>
            <person name="Hiraoka S."/>
            <person name="Chiba Y."/>
            <person name="Ishida S."/>
            <person name="Ono Y."/>
            <person name="Takiguchi S."/>
            <person name="Watanabe S."/>
            <person name="Yosida M."/>
            <person name="Hotuta T."/>
            <person name="Kusano J."/>
            <person name="Kanehori K."/>
            <person name="Takahashi-Fujii A."/>
            <person name="Hara H."/>
            <person name="Tanase T.-O."/>
            <person name="Nomura Y."/>
            <person name="Togiya S."/>
            <person name="Komai F."/>
            <person name="Hara R."/>
            <person name="Takeuchi K."/>
            <person name="Arita M."/>
            <person name="Imose N."/>
            <person name="Musashino K."/>
            <person name="Yuuki H."/>
            <person name="Oshima A."/>
            <person name="Sasaki N."/>
            <person name="Aotsuka S."/>
            <person name="Yoshikawa Y."/>
            <person name="Matsunawa H."/>
            <person name="Ichihara T."/>
            <person name="Shiohata N."/>
            <person name="Sano S."/>
            <person name="Moriya S."/>
            <person name="Momiyama H."/>
            <person name="Satoh N."/>
            <person name="Takami S."/>
            <person name="Terashima Y."/>
            <person name="Suzuki O."/>
            <person name="Nakagawa S."/>
            <person name="Senoh A."/>
            <person name="Mizoguchi H."/>
            <person name="Goto Y."/>
            <person name="Shimizu F."/>
            <person name="Wakebe H."/>
            <person name="Hishigaki H."/>
            <person name="Watanabe T."/>
            <person name="Sugiyama A."/>
            <person name="Takemoto M."/>
            <person name="Kawakami B."/>
            <person name="Yamazaki M."/>
            <person name="Watanabe K."/>
            <person name="Kumagai A."/>
            <person name="Itakura S."/>
            <person name="Fukuzumi Y."/>
            <person name="Fujimori Y."/>
            <person name="Komiyama M."/>
            <person name="Tashiro H."/>
            <person name="Tanigami A."/>
            <person name="Fujiwara T."/>
            <person name="Ono T."/>
            <person name="Yamada K."/>
            <person name="Fujii Y."/>
            <person name="Ozaki K."/>
            <person name="Hirao M."/>
            <person name="Ohmori Y."/>
            <person name="Kawabata A."/>
            <person name="Hikiji T."/>
            <person name="Kobatake N."/>
            <person name="Inagaki H."/>
            <person name="Ikema Y."/>
            <person name="Okamoto S."/>
            <person name="Okitani R."/>
            <person name="Kawakami T."/>
            <person name="Noguchi S."/>
            <person name="Itoh T."/>
            <person name="Shigeta K."/>
            <person name="Senba T."/>
            <person name="Matsumura K."/>
            <person name="Nakajima Y."/>
            <person name="Mizuno T."/>
            <person name="Morinaga M."/>
            <person name="Sasaki M."/>
            <person name="Togashi T."/>
            <person name="Oyama M."/>
            <person name="Hata H."/>
            <person name="Watanabe M."/>
            <person name="Komatsu T."/>
            <person name="Mizushima-Sugano J."/>
            <person name="Satoh T."/>
            <person name="Shirai Y."/>
            <person name="Takahashi Y."/>
            <person name="Nakagawa K."/>
            <person name="Okumura K."/>
            <person name="Nagase T."/>
            <person name="Nomura N."/>
            <person name="Kikuchi H."/>
            <person name="Masuho Y."/>
            <person name="Yamashita R."/>
            <person name="Nakai K."/>
            <person name="Yada T."/>
            <person name="Nakamura Y."/>
            <person name="Ohara O."/>
            <person name="Isogai T."/>
            <person name="Sugano S."/>
        </authorList>
    </citation>
    <scope>NUCLEOTIDE SEQUENCE [LARGE SCALE MRNA] (ISOFORM 1)</scope>
</reference>
<reference key="2">
    <citation type="journal article" date="2004" name="Genome Res.">
        <title>The status, quality, and expansion of the NIH full-length cDNA project: the Mammalian Gene Collection (MGC).</title>
        <authorList>
            <consortium name="The MGC Project Team"/>
        </authorList>
    </citation>
    <scope>NUCLEOTIDE SEQUENCE [LARGE SCALE MRNA] (ISOFORM 2)</scope>
    <source>
        <tissue>Lung</tissue>
    </source>
</reference>
<reference key="3">
    <citation type="journal article" date="2021" name="Mol. Syst. Biol.">
        <title>hu.MAP 2.0: integration of over 15,000 proteomic experiments builds a global compendium of human multiprotein assemblies.</title>
        <authorList>
            <person name="Drew K."/>
            <person name="Wallingford J.B."/>
            <person name="Marcotte E.M."/>
        </authorList>
    </citation>
    <scope>IDENTIFICATION AS PART OF THE INTEGRATOR COMPLEX</scope>
    <scope>SUBCELLULAR LOCATION</scope>
</reference>
<reference key="4">
    <citation type="journal article" date="2023" name="Cell Rep.">
        <title>A combinatorial approach to uncover an additional Integrator subunit.</title>
        <authorList>
            <person name="Offley S.R."/>
            <person name="Pfleiderer M.M."/>
            <person name="Zucco A."/>
            <person name="Fraudeau A."/>
            <person name="Welsh S.A."/>
            <person name="Razew M."/>
            <person name="Galej W.P."/>
            <person name="Gardini A."/>
        </authorList>
    </citation>
    <scope>FUNCTION</scope>
    <scope>SUBCELLULAR LOCATION</scope>
    <scope>IDENTIFICATION IN THE INTEGRATOR COMPLEX</scope>
    <scope>MUTAGENESIS OF 384-LEU--LEU-387</scope>
</reference>
<reference key="5">
    <citation type="journal article" date="2024" name="Mol. Cell">
        <title>Cytoplasmic binding partners of the Integrator endonuclease INTS11 and its paralog CPSF73 are required for their nuclear function.</title>
        <authorList>
            <person name="Lin M.H."/>
            <person name="Jensen M.K."/>
            <person name="Elrod N.D."/>
            <person name="Chu H.F."/>
            <person name="Haseley M."/>
            <person name="Beam A.C."/>
            <person name="Huang K.L."/>
            <person name="Chiang W."/>
            <person name="Russell W.K."/>
            <person name="Williams K."/>
            <person name="Proschel C."/>
            <person name="Wagner E.J."/>
            <person name="Tong L."/>
        </authorList>
    </citation>
    <scope>IDENTIFICATION IN THE INTEGRATOR COMPLEX</scope>
    <scope>SUBCELLULAR LOCATION</scope>
</reference>
<reference evidence="14 15 16 17 18" key="6">
    <citation type="journal article" date="2024" name="Mol. Cell">
        <title>Structural basis of the Integrator complex assembly and association with transcription factors.</title>
        <authorList>
            <person name="Razew M."/>
            <person name="Fraudeau A."/>
            <person name="Pfleiderer M.M."/>
            <person name="Linares R."/>
            <person name="Galej W.P."/>
        </authorList>
    </citation>
    <scope>STRUCTURE BY ELECTRON MICROSCOPY (3.30 ANGSTROMS) IN COMPLEX WITH INTS10; INTS13 AND INTS14</scope>
    <scope>FUNCTION</scope>
    <scope>IDENTIFICATION IN THE INTEGRATOR COMPLEX</scope>
    <scope>MUTAGENESIS OF 69-LEU--LEU-72 AND 120-MET--VAL-124</scope>
</reference>
<reference evidence="11 12 13" key="7">
    <citation type="journal article" date="2024" name="Nature">
        <title>Structural basis of Integrator-dependent RNA polymerase II termination.</title>
        <authorList>
            <person name="Fianu I."/>
            <person name="Ochmann M."/>
            <person name="Walshe J.L."/>
            <person name="Dybkov O."/>
            <person name="Cruz J.N."/>
            <person name="Urlaub H."/>
            <person name="Cramer P."/>
        </authorList>
    </citation>
    <scope>STRUCTURE BY ELECTRON MICROSCOPY (3.10 ANGSTROMS) OF INTAC COMPLEX</scope>
    <scope>FUNCTION</scope>
    <scope>IDENTIFICATION IN THE INTAC COMPLEX</scope>
</reference>
<comment type="function">
    <text evidence="2 3 4">Component of the integrator complex, a multiprotein complex that terminates RNA polymerase II (Pol II) transcription in the promoter-proximal region of genes (PubMed:36920904, PubMed:38570683, PubMed:38823386). The integrator complex provides a quality checkpoint during transcription elongation by driving premature transcription termination of transcripts that are unfavorably configured for transcriptional elongation: the complex terminates transcription by (1) catalyzing dephosphorylation of the C-terminal domain (CTD) of Pol II subunit POLR2A/RPB1 and SUPT5H/SPT5, (2) degrading the exiting nascent RNA transcript via endonuclease activity and (3) promoting the release of Pol II from bound DNA (PubMed:38570683). The integrator complex is also involved in terminating the synthesis of non-coding Pol II transcripts, such as enhancer RNAs (eRNAs), small nuclear RNAs (snRNAs), telomerase RNAs and long non-coding RNAs (lncRNAs) (PubMed:38570683). INTS15 is part of the integrator tail module that acts as a platform for the recruitment of transcription factors at promoters (PubMed:38823386). Within the integrator complex, INTS15 is required to bridge different integrator modules (PubMed:36920904).</text>
</comment>
<comment type="subunit">
    <text evidence="1 2 3 4 5">Component of the Integrator complex, composed of core subunits INTS1, INTS2, INTS3, INTS4, INTS5, INTS6, INTS7, INTS8, INTS9/RC74, INTS10, INTS11/CPSF3L, INTS12, INTS13, INTS14 and INTS15 (PubMed:33973408, PubMed:36920904, PubMed:38570683, PubMed:38823386, PubMed:39032490). The core complex associates with protein phosphatase 2A subunits PPP2CA and PPP2R1A, to form the Integrator-PP2A (INTAC) complex (PubMed:38570683). INTS15 is part of the tail subcomplex, composed of INTS10, INTS13, INTS14 and INTS15 (PubMed:38823386).</text>
</comment>
<comment type="subcellular location">
    <subcellularLocation>
        <location evidence="2 5 9">Nucleus</location>
    </subcellularLocation>
    <subcellularLocation>
        <location evidence="2">Chromosome</location>
    </subcellularLocation>
    <text evidence="2">Associates to RNA polymerase II (Pol II) during active transcription.</text>
</comment>
<comment type="alternative products">
    <event type="alternative splicing"/>
    <isoform>
        <id>Q96N11-1</id>
        <name>1</name>
        <sequence type="displayed"/>
    </isoform>
    <isoform>
        <id>Q96N11-2</id>
        <name>2</name>
        <sequence type="described" ref="VSP_007907 VSP_007908"/>
    </isoform>
</comment>
<comment type="similarity">
    <text evidence="8">Belongs to the Integrator subunit 15 family.</text>
</comment>
<gene>
    <name evidence="7 10" type="primary">INTS15</name>
    <name evidence="7 10" type="synonym">C7orf26</name>
</gene>
<evidence type="ECO:0000269" key="1">
    <source>
    </source>
</evidence>
<evidence type="ECO:0000269" key="2">
    <source>
    </source>
</evidence>
<evidence type="ECO:0000269" key="3">
    <source>
    </source>
</evidence>
<evidence type="ECO:0000269" key="4">
    <source>
    </source>
</evidence>
<evidence type="ECO:0000269" key="5">
    <source>
    </source>
</evidence>
<evidence type="ECO:0000303" key="6">
    <source>
    </source>
</evidence>
<evidence type="ECO:0000303" key="7">
    <source>
    </source>
</evidence>
<evidence type="ECO:0000305" key="8"/>
<evidence type="ECO:0000305" key="9">
    <source>
    </source>
</evidence>
<evidence type="ECO:0000312" key="10">
    <source>
        <dbReference type="HGNC" id="HGNC:21702"/>
    </source>
</evidence>
<evidence type="ECO:0007744" key="11">
    <source>
        <dbReference type="PDB" id="8RBX"/>
    </source>
</evidence>
<evidence type="ECO:0007744" key="12">
    <source>
        <dbReference type="PDB" id="8RBZ"/>
    </source>
</evidence>
<evidence type="ECO:0007744" key="13">
    <source>
        <dbReference type="PDB" id="8RC4"/>
    </source>
</evidence>
<evidence type="ECO:0007744" key="14">
    <source>
        <dbReference type="PDB" id="9EOF"/>
    </source>
</evidence>
<evidence type="ECO:0007744" key="15">
    <source>
        <dbReference type="PDB" id="9EP1"/>
    </source>
</evidence>
<evidence type="ECO:0007744" key="16">
    <source>
        <dbReference type="PDB" id="9EP4"/>
    </source>
</evidence>
<evidence type="ECO:0007744" key="17">
    <source>
        <dbReference type="PDB" id="9FA4"/>
    </source>
</evidence>
<evidence type="ECO:0007744" key="18">
    <source>
        <dbReference type="PDB" id="9FA7"/>
    </source>
</evidence>
<evidence type="ECO:0007829" key="19">
    <source>
        <dbReference type="PDB" id="8RC4"/>
    </source>
</evidence>
<evidence type="ECO:0007829" key="20">
    <source>
        <dbReference type="PDB" id="9EP4"/>
    </source>
</evidence>
<keyword id="KW-0002">3D-structure</keyword>
<keyword id="KW-0025">Alternative splicing</keyword>
<keyword id="KW-0158">Chromosome</keyword>
<keyword id="KW-0539">Nucleus</keyword>
<keyword id="KW-1267">Proteomics identification</keyword>
<keyword id="KW-1185">Reference proteome</keyword>
<protein>
    <recommendedName>
        <fullName evidence="8">Integrator complex subunit 15</fullName>
    </recommendedName>
</protein>
<name>INT15_HUMAN</name>
<dbReference type="EMBL" id="AK056149">
    <property type="protein sequence ID" value="BAB71104.1"/>
    <property type="molecule type" value="mRNA"/>
</dbReference>
<dbReference type="EMBL" id="BC005121">
    <property type="protein sequence ID" value="AAH05121.1"/>
    <property type="molecule type" value="mRNA"/>
</dbReference>
<dbReference type="EMBL" id="BC001076">
    <property type="protein sequence ID" value="AAH01076.1"/>
    <property type="molecule type" value="mRNA"/>
</dbReference>
<dbReference type="CCDS" id="CCDS5353.1">
    <molecule id="Q96N11-1"/>
</dbReference>
<dbReference type="CCDS" id="CCDS78206.1">
    <molecule id="Q96N11-2"/>
</dbReference>
<dbReference type="RefSeq" id="NP_001289968.1">
    <molecule id="Q96N11-2"/>
    <property type="nucleotide sequence ID" value="NM_001303039.2"/>
</dbReference>
<dbReference type="RefSeq" id="NP_076972.2">
    <molecule id="Q96N11-1"/>
    <property type="nucleotide sequence ID" value="NM_024067.3"/>
</dbReference>
<dbReference type="PDB" id="8RBX">
    <property type="method" value="EM"/>
    <property type="resolution" value="4.10 A"/>
    <property type="chains" value="o=1-449"/>
</dbReference>
<dbReference type="PDB" id="8RBZ">
    <property type="method" value="EM"/>
    <property type="resolution" value="3.70 A"/>
    <property type="chains" value="o=1-449"/>
</dbReference>
<dbReference type="PDB" id="8RC4">
    <property type="method" value="EM"/>
    <property type="resolution" value="3.10 A"/>
    <property type="chains" value="o=1-449"/>
</dbReference>
<dbReference type="PDB" id="9EOF">
    <property type="method" value="EM"/>
    <property type="resolution" value="7.70 A"/>
    <property type="chains" value="C=1-449"/>
</dbReference>
<dbReference type="PDB" id="9EP1">
    <property type="method" value="EM"/>
    <property type="resolution" value="4.00 A"/>
    <property type="chains" value="C=1-391"/>
</dbReference>
<dbReference type="PDB" id="9EP4">
    <property type="method" value="EM"/>
    <property type="resolution" value="3.20 A"/>
    <property type="chains" value="D=1-449"/>
</dbReference>
<dbReference type="PDB" id="9FA4">
    <property type="method" value="EM"/>
    <property type="resolution" value="4.00 A"/>
    <property type="chains" value="C=1-449"/>
</dbReference>
<dbReference type="PDB" id="9FA7">
    <property type="method" value="EM"/>
    <property type="resolution" value="4.00 A"/>
    <property type="chains" value="C=1-449"/>
</dbReference>
<dbReference type="PDBsum" id="8RBX"/>
<dbReference type="PDBsum" id="8RBZ"/>
<dbReference type="PDBsum" id="8RC4"/>
<dbReference type="PDBsum" id="9EOF"/>
<dbReference type="PDBsum" id="9EP1"/>
<dbReference type="PDBsum" id="9EP4"/>
<dbReference type="PDBsum" id="9FA4"/>
<dbReference type="PDBsum" id="9FA7"/>
<dbReference type="EMDB" id="EMD-19038"/>
<dbReference type="EMDB" id="EMD-19040"/>
<dbReference type="EMDB" id="EMD-19047"/>
<dbReference type="EMDB" id="EMD-19853"/>
<dbReference type="EMDB" id="EMD-19871"/>
<dbReference type="EMDB" id="EMD-19872"/>
<dbReference type="EMDB" id="EMD-50267"/>
<dbReference type="EMDB" id="EMD-50268"/>
<dbReference type="SMR" id="Q96N11"/>
<dbReference type="BioGRID" id="122499">
    <property type="interactions" value="36"/>
</dbReference>
<dbReference type="FunCoup" id="Q96N11">
    <property type="interactions" value="1511"/>
</dbReference>
<dbReference type="IntAct" id="Q96N11">
    <property type="interactions" value="14"/>
</dbReference>
<dbReference type="MINT" id="Q96N11"/>
<dbReference type="STRING" id="9606.ENSP00000340220"/>
<dbReference type="iPTMnet" id="Q96N11"/>
<dbReference type="PhosphoSitePlus" id="Q96N11"/>
<dbReference type="BioMuta" id="C7orf26"/>
<dbReference type="DMDM" id="33301033"/>
<dbReference type="jPOST" id="Q96N11"/>
<dbReference type="MassIVE" id="Q96N11"/>
<dbReference type="PaxDb" id="9606-ENSP00000340220"/>
<dbReference type="PeptideAtlas" id="Q96N11"/>
<dbReference type="ProteomicsDB" id="77440">
    <molecule id="Q96N11-1"/>
</dbReference>
<dbReference type="ProteomicsDB" id="77441">
    <molecule id="Q96N11-2"/>
</dbReference>
<dbReference type="Pumba" id="Q96N11"/>
<dbReference type="Antibodypedia" id="64371">
    <property type="antibodies" value="39 antibodies from 11 providers"/>
</dbReference>
<dbReference type="DNASU" id="79034"/>
<dbReference type="Ensembl" id="ENST00000344417.10">
    <molecule id="Q96N11-1"/>
    <property type="protein sequence ID" value="ENSP00000340220.5"/>
    <property type="gene ID" value="ENSG00000146576.13"/>
</dbReference>
<dbReference type="Ensembl" id="ENST00000359073.9">
    <molecule id="Q96N11-2"/>
    <property type="protein sequence ID" value="ENSP00000351974.5"/>
    <property type="gene ID" value="ENSG00000146576.13"/>
</dbReference>
<dbReference type="GeneID" id="79034"/>
<dbReference type="KEGG" id="hsa:79034"/>
<dbReference type="MANE-Select" id="ENST00000344417.10">
    <property type="protein sequence ID" value="ENSP00000340220.5"/>
    <property type="RefSeq nucleotide sequence ID" value="NM_024067.4"/>
    <property type="RefSeq protein sequence ID" value="NP_076972.2"/>
</dbReference>
<dbReference type="UCSC" id="uc003sqo.2">
    <molecule id="Q96N11-1"/>
    <property type="organism name" value="human"/>
</dbReference>
<dbReference type="AGR" id="HGNC:21702"/>
<dbReference type="CTD" id="79034"/>
<dbReference type="GeneCards" id="INTS15"/>
<dbReference type="HGNC" id="HGNC:21702">
    <property type="gene designation" value="INTS15"/>
</dbReference>
<dbReference type="HPA" id="ENSG00000146576">
    <property type="expression patterns" value="Low tissue specificity"/>
</dbReference>
<dbReference type="neXtProt" id="NX_Q96N11"/>
<dbReference type="OpenTargets" id="ENSG00000146576"/>
<dbReference type="VEuPathDB" id="HostDB:ENSG00000146576"/>
<dbReference type="eggNOG" id="ENOG502QW9D">
    <property type="taxonomic scope" value="Eukaryota"/>
</dbReference>
<dbReference type="GeneTree" id="ENSGT00390000011370"/>
<dbReference type="HOGENOM" id="CLU_045490_1_0_1"/>
<dbReference type="InParanoid" id="Q96N11"/>
<dbReference type="OMA" id="DDGDCHQ"/>
<dbReference type="OrthoDB" id="5861309at2759"/>
<dbReference type="PAN-GO" id="Q96N11">
    <property type="GO annotations" value="0 GO annotations based on evolutionary models"/>
</dbReference>
<dbReference type="PhylomeDB" id="Q96N11"/>
<dbReference type="TreeFam" id="TF324587"/>
<dbReference type="PathwayCommons" id="Q96N11"/>
<dbReference type="SignaLink" id="Q96N11"/>
<dbReference type="BioGRID-ORCS" id="79034">
    <property type="hits" value="445 hits in 1137 CRISPR screens"/>
</dbReference>
<dbReference type="ChiTaRS" id="C7orf26">
    <property type="organism name" value="human"/>
</dbReference>
<dbReference type="GenomeRNAi" id="79034"/>
<dbReference type="Pharos" id="Q96N11">
    <property type="development level" value="Tdark"/>
</dbReference>
<dbReference type="PRO" id="PR:Q96N11"/>
<dbReference type="Proteomes" id="UP000005640">
    <property type="component" value="Chromosome 7"/>
</dbReference>
<dbReference type="RNAct" id="Q96N11">
    <property type="molecule type" value="protein"/>
</dbReference>
<dbReference type="Bgee" id="ENSG00000146576">
    <property type="expression patterns" value="Expressed in granulocyte and 181 other cell types or tissues"/>
</dbReference>
<dbReference type="ExpressionAtlas" id="Q96N11">
    <property type="expression patterns" value="baseline and differential"/>
</dbReference>
<dbReference type="GO" id="GO:0005694">
    <property type="term" value="C:chromosome"/>
    <property type="evidence" value="ECO:0000314"/>
    <property type="project" value="UniProtKB"/>
</dbReference>
<dbReference type="GO" id="GO:0160232">
    <property type="term" value="C:INTAC complex"/>
    <property type="evidence" value="ECO:0000314"/>
    <property type="project" value="UniProtKB"/>
</dbReference>
<dbReference type="GO" id="GO:0032039">
    <property type="term" value="C:integrator complex"/>
    <property type="evidence" value="ECO:0000314"/>
    <property type="project" value="UniProtKB"/>
</dbReference>
<dbReference type="GO" id="GO:0005634">
    <property type="term" value="C:nucleus"/>
    <property type="evidence" value="ECO:0000314"/>
    <property type="project" value="UniProtKB"/>
</dbReference>
<dbReference type="GO" id="GO:0007420">
    <property type="term" value="P:brain development"/>
    <property type="evidence" value="ECO:0007669"/>
    <property type="project" value="Ensembl"/>
</dbReference>
<dbReference type="GO" id="GO:0001654">
    <property type="term" value="P:eye development"/>
    <property type="evidence" value="ECO:0007669"/>
    <property type="project" value="Ensembl"/>
</dbReference>
<dbReference type="GO" id="GO:0000398">
    <property type="term" value="P:mRNA splicing, via spliceosome"/>
    <property type="evidence" value="ECO:0007669"/>
    <property type="project" value="Ensembl"/>
</dbReference>
<dbReference type="GO" id="GO:0160240">
    <property type="term" value="P:RNA polymerase II transcription initiation surveillance"/>
    <property type="evidence" value="ECO:0000314"/>
    <property type="project" value="UniProtKB"/>
</dbReference>
<dbReference type="InterPro" id="IPR027844">
    <property type="entry name" value="INTS15"/>
</dbReference>
<dbReference type="PANTHER" id="PTHR14540">
    <property type="entry name" value="INTEGRATOR COMPLEX SUBUNIT 15"/>
    <property type="match status" value="1"/>
</dbReference>
<dbReference type="PANTHER" id="PTHR14540:SF2">
    <property type="entry name" value="INTEGRATOR COMPLEX SUBUNIT 15"/>
    <property type="match status" value="1"/>
</dbReference>
<dbReference type="Pfam" id="PF14964">
    <property type="entry name" value="INTS15"/>
    <property type="match status" value="1"/>
</dbReference>
<feature type="chain" id="PRO_0000089582" description="Integrator complex subunit 15">
    <location>
        <begin position="1"/>
        <end position="449"/>
    </location>
</feature>
<feature type="splice variant" id="VSP_007907" description="In isoform 2." evidence="6">
    <location>
        <begin position="65"/>
        <end position="83"/>
    </location>
</feature>
<feature type="splice variant" id="VSP_007908" description="In isoform 2." evidence="6">
    <location>
        <begin position="215"/>
        <end position="292"/>
    </location>
</feature>
<feature type="sequence variant" id="VAR_061593" description="In dbSNP:rs35534502.">
    <original>R</original>
    <variation>C</variation>
    <location>
        <position position="245"/>
    </location>
</feature>
<feature type="mutagenesis site" description="Abolished intraction with INTS5, leading to Impaired assembly of the integrator complex." evidence="4">
    <original>LQEL</original>
    <variation>AQEA</variation>
    <location>
        <begin position="69"/>
        <end position="72"/>
    </location>
</feature>
<feature type="mutagenesis site" description="Abolished intraction with INTS5, leading to Impaired assembly of the integrator complex." evidence="4">
    <original>MAVAV</original>
    <variation>AAVAA</variation>
    <location>
        <begin position="120"/>
        <end position="124"/>
    </location>
</feature>
<feature type="mutagenesis site" description="Abolished interaction with INTS10." evidence="2">
    <original>LLQL</original>
    <variation>ALQA</variation>
    <location>
        <begin position="384"/>
        <end position="387"/>
    </location>
</feature>
<feature type="helix" evidence="19">
    <location>
        <begin position="2"/>
        <end position="9"/>
    </location>
</feature>
<feature type="turn" evidence="19">
    <location>
        <begin position="12"/>
        <end position="15"/>
    </location>
</feature>
<feature type="helix" evidence="19">
    <location>
        <begin position="16"/>
        <end position="27"/>
    </location>
</feature>
<feature type="turn" evidence="19">
    <location>
        <begin position="28"/>
        <end position="30"/>
    </location>
</feature>
<feature type="helix" evidence="19">
    <location>
        <begin position="31"/>
        <end position="34"/>
    </location>
</feature>
<feature type="helix" evidence="19">
    <location>
        <begin position="42"/>
        <end position="52"/>
    </location>
</feature>
<feature type="helix" evidence="19">
    <location>
        <begin position="69"/>
        <end position="83"/>
    </location>
</feature>
<feature type="helix" evidence="19">
    <location>
        <begin position="88"/>
        <end position="95"/>
    </location>
</feature>
<feature type="helix" evidence="19">
    <location>
        <begin position="96"/>
        <end position="98"/>
    </location>
</feature>
<feature type="helix" evidence="19">
    <location>
        <begin position="107"/>
        <end position="123"/>
    </location>
</feature>
<feature type="helix" evidence="19">
    <location>
        <begin position="127"/>
        <end position="139"/>
    </location>
</feature>
<feature type="helix" evidence="19">
    <location>
        <begin position="142"/>
        <end position="157"/>
    </location>
</feature>
<feature type="turn" evidence="19">
    <location>
        <begin position="161"/>
        <end position="163"/>
    </location>
</feature>
<feature type="helix" evidence="19">
    <location>
        <begin position="164"/>
        <end position="173"/>
    </location>
</feature>
<feature type="helix" evidence="19">
    <location>
        <begin position="175"/>
        <end position="187"/>
    </location>
</feature>
<feature type="strand" evidence="19">
    <location>
        <begin position="190"/>
        <end position="193"/>
    </location>
</feature>
<feature type="turn" evidence="19">
    <location>
        <begin position="194"/>
        <end position="196"/>
    </location>
</feature>
<feature type="helix" evidence="19">
    <location>
        <begin position="200"/>
        <end position="223"/>
    </location>
</feature>
<feature type="helix" evidence="19">
    <location>
        <begin position="240"/>
        <end position="248"/>
    </location>
</feature>
<feature type="helix" evidence="19">
    <location>
        <begin position="250"/>
        <end position="256"/>
    </location>
</feature>
<feature type="helix" evidence="19">
    <location>
        <begin position="277"/>
        <end position="282"/>
    </location>
</feature>
<feature type="helix" evidence="19">
    <location>
        <begin position="284"/>
        <end position="304"/>
    </location>
</feature>
<feature type="strand" evidence="19">
    <location>
        <begin position="306"/>
        <end position="308"/>
    </location>
</feature>
<feature type="turn" evidence="20">
    <location>
        <begin position="311"/>
        <end position="313"/>
    </location>
</feature>
<feature type="helix" evidence="19">
    <location>
        <begin position="322"/>
        <end position="333"/>
    </location>
</feature>
<feature type="strand" evidence="19">
    <location>
        <begin position="334"/>
        <end position="336"/>
    </location>
</feature>
<feature type="helix" evidence="19">
    <location>
        <begin position="337"/>
        <end position="340"/>
    </location>
</feature>
<feature type="helix" evidence="19">
    <location>
        <begin position="342"/>
        <end position="360"/>
    </location>
</feature>
<feature type="turn" evidence="19">
    <location>
        <begin position="361"/>
        <end position="363"/>
    </location>
</feature>
<feature type="helix" evidence="19">
    <location>
        <begin position="370"/>
        <end position="375"/>
    </location>
</feature>
<feature type="helix" evidence="19">
    <location>
        <begin position="376"/>
        <end position="378"/>
    </location>
</feature>
<feature type="helix" evidence="19">
    <location>
        <begin position="383"/>
        <end position="389"/>
    </location>
</feature>